<reference key="1">
    <citation type="journal article" date="1993" name="Proc. Natl. Acad. Sci. U.S.A.">
        <title>Molecular characterization of an operon required for pertussis toxin secretion.</title>
        <authorList>
            <person name="Weiss A.A."/>
            <person name="Johnson F.D."/>
            <person name="Burns D.L."/>
        </authorList>
    </citation>
    <scope>NUCLEOTIDE SEQUENCE [GENOMIC DNA]</scope>
    <scope>FUNCTION</scope>
    <source>
        <strain>Tohama I / BP338</strain>
    </source>
</reference>
<reference key="2">
    <citation type="journal article" date="2003" name="Nat. Genet.">
        <title>Comparative analysis of the genome sequences of Bordetella pertussis, Bordetella parapertussis and Bordetella bronchiseptica.</title>
        <authorList>
            <person name="Parkhill J."/>
            <person name="Sebaihia M."/>
            <person name="Preston A."/>
            <person name="Murphy L.D."/>
            <person name="Thomson N.R."/>
            <person name="Harris D.E."/>
            <person name="Holden M.T.G."/>
            <person name="Churcher C.M."/>
            <person name="Bentley S.D."/>
            <person name="Mungall K.L."/>
            <person name="Cerdeno-Tarraga A.-M."/>
            <person name="Temple L."/>
            <person name="James K.D."/>
            <person name="Harris B."/>
            <person name="Quail M.A."/>
            <person name="Achtman M."/>
            <person name="Atkin R."/>
            <person name="Baker S."/>
            <person name="Basham D."/>
            <person name="Bason N."/>
            <person name="Cherevach I."/>
            <person name="Chillingworth T."/>
            <person name="Collins M."/>
            <person name="Cronin A."/>
            <person name="Davis P."/>
            <person name="Doggett J."/>
            <person name="Feltwell T."/>
            <person name="Goble A."/>
            <person name="Hamlin N."/>
            <person name="Hauser H."/>
            <person name="Holroyd S."/>
            <person name="Jagels K."/>
            <person name="Leather S."/>
            <person name="Moule S."/>
            <person name="Norberczak H."/>
            <person name="O'Neil S."/>
            <person name="Ormond D."/>
            <person name="Price C."/>
            <person name="Rabbinowitsch E."/>
            <person name="Rutter S."/>
            <person name="Sanders M."/>
            <person name="Saunders D."/>
            <person name="Seeger K."/>
            <person name="Sharp S."/>
            <person name="Simmonds M."/>
            <person name="Skelton J."/>
            <person name="Squares R."/>
            <person name="Squares S."/>
            <person name="Stevens K."/>
            <person name="Unwin L."/>
            <person name="Whitehead S."/>
            <person name="Barrell B.G."/>
            <person name="Maskell D.J."/>
        </authorList>
    </citation>
    <scope>NUCLEOTIDE SEQUENCE [LARGE SCALE GENOMIC DNA]</scope>
    <source>
        <strain>Tohama I / ATCC BAA-589 / NCTC 13251</strain>
    </source>
</reference>
<reference key="3">
    <citation type="journal article" date="1995" name="J. Bacteriol.">
        <title>Synergistic binding of RNA polymerase and BvgA phosphate to the pertussis toxin promoter of Bordetella pertussis.</title>
        <authorList>
            <person name="Boucher P.E."/>
            <person name="Stibitz S."/>
        </authorList>
    </citation>
    <scope>REGULATION BY BVGS/BVGA</scope>
    <source>
        <strain>Tohama I / ATCC BAA-589 / NCTC 13251</strain>
    </source>
</reference>
<reference key="4">
    <citation type="journal article" date="1996" name="Infect. Immun.">
        <title>The pertussis toxin liberation genes of Bordetella pertussis are transcriptionally linked to the pertussis toxin operon.</title>
        <authorList>
            <person name="Ricci S."/>
            <person name="Rappuoli R."/>
            <person name="Scarlato V."/>
        </authorList>
    </citation>
    <scope>COTRANSCRIPTION WITH PTX</scope>
    <source>
        <strain>Wellcome 28</strain>
    </source>
</reference>
<reference key="5">
    <citation type="journal article" date="1999" name="FEMS Microbiol. Lett.">
        <title>Mutants in the ptlA-H genes of Bordetella pertussis are deficient for pertussis toxin secretion.</title>
        <authorList>
            <person name="Craig-Mylius K.A."/>
            <person name="Weiss A.A."/>
        </authorList>
    </citation>
    <scope>FUNCTION</scope>
    <source>
        <strain>Tohama I / BP338</strain>
    </source>
</reference>
<reference key="6">
    <citation type="journal article" date="2004" name="Infect. Immun.">
        <title>Analysis of subassemblies of pertussis toxin subunits in vivo and their interaction with the ptl transport apparatus.</title>
        <authorList>
            <person name="Burns D.L."/>
            <person name="Fiddner S."/>
            <person name="Cheung A.M."/>
            <person name="Verma A."/>
        </authorList>
    </citation>
    <scope>FUNCTION</scope>
    <source>
        <strain>Tohama I / BP338</strain>
    </source>
</reference>
<name>PTLD_BORPE</name>
<sequence length="463" mass="48679">MAGLSRILLSCTLACLLAGQAAQASVDDPTRAGGDNRVRALRADQARRDVLLTACRDDPGHRRGEPDCVNAERAQALQQWQAAAMTSVDAAFSDLAGALRNAAPRRMEAAIVRLTRQLQPLVYSMMTLLVLLTGYALLARRDRPFEWHIRHALLVAVVTSLALSPDRYLSTVVAGVQDVAGWLSGPWTAPDGAAGRGGLAQLDQFAAQAQAWVAQLAGQAANDANPGSAVNWLLCAMIVAASAGGWLCLAASLLIVPGLIVTLLLSLGPLFLVLLLFPALQRWTNAWLGALVRALVFMALGTPAVGLLSDVLAGALPAGLPQRFATDPLRSTMLAATLCATATLMLLTLVPLASSVNAGLRRRLWPNAAHPGLAQAHRQAAARQYAPRPAAAAAAAGPHQAGTYAASATPAPAPARPAPSFPAHAYRQYALGGARRPPPRVRRDDRPAPAPDRRVLPRKPNLP</sequence>
<proteinExistence type="evidence at transcript level"/>
<keyword id="KW-1003">Cell membrane</keyword>
<keyword id="KW-0472">Membrane</keyword>
<keyword id="KW-1185">Reference proteome</keyword>
<keyword id="KW-0732">Signal</keyword>
<keyword id="KW-0812">Transmembrane</keyword>
<keyword id="KW-1133">Transmembrane helix</keyword>
<keyword id="KW-0813">Transport</keyword>
<organism>
    <name type="scientific">Bordetella pertussis (strain Tohama I / ATCC BAA-589 / NCTC 13251)</name>
    <dbReference type="NCBI Taxonomy" id="257313"/>
    <lineage>
        <taxon>Bacteria</taxon>
        <taxon>Pseudomonadati</taxon>
        <taxon>Pseudomonadota</taxon>
        <taxon>Betaproteobacteria</taxon>
        <taxon>Burkholderiales</taxon>
        <taxon>Alcaligenaceae</taxon>
        <taxon>Bordetella</taxon>
    </lineage>
</organism>
<evidence type="ECO:0000255" key="1"/>
<evidence type="ECO:0000256" key="2">
    <source>
        <dbReference type="SAM" id="MobiDB-lite"/>
    </source>
</evidence>
<evidence type="ECO:0000269" key="3">
    <source>
    </source>
</evidence>
<evidence type="ECO:0000269" key="4">
    <source>
    </source>
</evidence>
<evidence type="ECO:0000269" key="5">
    <source>
    </source>
</evidence>
<evidence type="ECO:0000305" key="6"/>
<feature type="signal peptide" evidence="1">
    <location>
        <begin position="1"/>
        <end position="24"/>
    </location>
</feature>
<feature type="chain" id="PRO_0000262575" description="Type IV secretion system protein PtlD">
    <location>
        <begin position="25"/>
        <end position="463"/>
    </location>
</feature>
<feature type="transmembrane region" description="Helical" evidence="1">
    <location>
        <begin position="118"/>
        <end position="138"/>
    </location>
</feature>
<feature type="transmembrane region" description="Helical" evidence="1">
    <location>
        <begin position="232"/>
        <end position="252"/>
    </location>
</feature>
<feature type="transmembrane region" description="Helical" evidence="1">
    <location>
        <begin position="253"/>
        <end position="273"/>
    </location>
</feature>
<feature type="transmembrane region" description="Helical" evidence="1">
    <location>
        <begin position="294"/>
        <end position="314"/>
    </location>
</feature>
<feature type="transmembrane region" description="Helical" evidence="1">
    <location>
        <begin position="333"/>
        <end position="353"/>
    </location>
</feature>
<feature type="region of interest" description="Disordered" evidence="2">
    <location>
        <begin position="376"/>
        <end position="463"/>
    </location>
</feature>
<feature type="compositionally biased region" description="Low complexity" evidence="2">
    <location>
        <begin position="376"/>
        <end position="410"/>
    </location>
</feature>
<feature type="compositionally biased region" description="Pro residues" evidence="2">
    <location>
        <begin position="411"/>
        <end position="420"/>
    </location>
</feature>
<feature type="compositionally biased region" description="Basic and acidic residues" evidence="2">
    <location>
        <begin position="441"/>
        <end position="455"/>
    </location>
</feature>
<dbReference type="EMBL" id="L10720">
    <property type="status" value="NOT_ANNOTATED_CDS"/>
    <property type="molecule type" value="Genomic_DNA"/>
</dbReference>
<dbReference type="EMBL" id="BX640422">
    <property type="protein sequence ID" value="CAE44046.1"/>
    <property type="molecule type" value="Genomic_DNA"/>
</dbReference>
<dbReference type="RefSeq" id="NP_882290.1">
    <property type="nucleotide sequence ID" value="NC_002929.2"/>
</dbReference>
<dbReference type="RefSeq" id="WP_010931653.1">
    <property type="nucleotide sequence ID" value="NZ_CP039022.1"/>
</dbReference>
<dbReference type="SMR" id="Q7VSX8"/>
<dbReference type="STRING" id="257313.BP3791"/>
<dbReference type="PaxDb" id="257313-BP3791"/>
<dbReference type="GeneID" id="69599984"/>
<dbReference type="KEGG" id="bpe:BP3791"/>
<dbReference type="PATRIC" id="fig|257313.5.peg.4095"/>
<dbReference type="HOGENOM" id="CLU_592732_0_0_4"/>
<dbReference type="Proteomes" id="UP000002676">
    <property type="component" value="Chromosome"/>
</dbReference>
<dbReference type="GO" id="GO:0005886">
    <property type="term" value="C:plasma membrane"/>
    <property type="evidence" value="ECO:0007669"/>
    <property type="project" value="UniProtKB-SubCell"/>
</dbReference>
<dbReference type="GO" id="GO:0030255">
    <property type="term" value="P:protein secretion by the type IV secretion system"/>
    <property type="evidence" value="ECO:0007669"/>
    <property type="project" value="InterPro"/>
</dbReference>
<dbReference type="InterPro" id="IPR007688">
    <property type="entry name" value="Conjugal_tfr_TrbL/VirB6"/>
</dbReference>
<dbReference type="Pfam" id="PF04610">
    <property type="entry name" value="TrbL"/>
    <property type="match status" value="1"/>
</dbReference>
<comment type="function">
    <text evidence="3 4 5">Component of the type IV secretion system ptl required for secretion of assembled pertussis toxin (PTX) through the outer membrane.</text>
</comment>
<comment type="subcellular location">
    <subcellularLocation>
        <location evidence="6">Cell membrane</location>
        <topology evidence="6">Multi-pass membrane protein</topology>
    </subcellularLocation>
</comment>
<comment type="induction">
    <text>Cotranscribed with ptxABCDE. Activated by the two-component regulatory system BvgS/BvgA.</text>
</comment>
<protein>
    <recommendedName>
        <fullName>Type IV secretion system protein PtlD</fullName>
    </recommendedName>
    <alternativeName>
        <fullName>Pertussis toxin liberation protein D</fullName>
    </alternativeName>
</protein>
<accession>Q7VSX8</accession>
<gene>
    <name type="primary">ptlD</name>
    <name type="ordered locus">BP3791</name>
</gene>